<name>ASSY_CLOAB</name>
<reference key="1">
    <citation type="journal article" date="2001" name="J. Bacteriol.">
        <title>Genome sequence and comparative analysis of the solvent-producing bacterium Clostridium acetobutylicum.</title>
        <authorList>
            <person name="Noelling J."/>
            <person name="Breton G."/>
            <person name="Omelchenko M.V."/>
            <person name="Makarova K.S."/>
            <person name="Zeng Q."/>
            <person name="Gibson R."/>
            <person name="Lee H.M."/>
            <person name="Dubois J."/>
            <person name="Qiu D."/>
            <person name="Hitti J."/>
            <person name="Wolf Y.I."/>
            <person name="Tatusov R.L."/>
            <person name="Sabathe F."/>
            <person name="Doucette-Stamm L.A."/>
            <person name="Soucaille P."/>
            <person name="Daly M.J."/>
            <person name="Bennett G.N."/>
            <person name="Koonin E.V."/>
            <person name="Smith D.R."/>
        </authorList>
    </citation>
    <scope>NUCLEOTIDE SEQUENCE [LARGE SCALE GENOMIC DNA]</scope>
    <source>
        <strain>ATCC 824 / DSM 792 / JCM 1419 / IAM 19013 / LMG 5710 / NBRC 13948 / NRRL B-527 / VKM B-1787 / 2291 / W</strain>
    </source>
</reference>
<evidence type="ECO:0000255" key="1">
    <source>
        <dbReference type="HAMAP-Rule" id="MF_00005"/>
    </source>
</evidence>
<protein>
    <recommendedName>
        <fullName evidence="1">Argininosuccinate synthase</fullName>
        <ecNumber evidence="1">6.3.4.5</ecNumber>
    </recommendedName>
    <alternativeName>
        <fullName evidence="1">Citrulline--aspartate ligase</fullName>
    </alternativeName>
</protein>
<comment type="catalytic activity">
    <reaction evidence="1">
        <text>L-citrulline + L-aspartate + ATP = 2-(N(omega)-L-arginino)succinate + AMP + diphosphate + H(+)</text>
        <dbReference type="Rhea" id="RHEA:10932"/>
        <dbReference type="ChEBI" id="CHEBI:15378"/>
        <dbReference type="ChEBI" id="CHEBI:29991"/>
        <dbReference type="ChEBI" id="CHEBI:30616"/>
        <dbReference type="ChEBI" id="CHEBI:33019"/>
        <dbReference type="ChEBI" id="CHEBI:57472"/>
        <dbReference type="ChEBI" id="CHEBI:57743"/>
        <dbReference type="ChEBI" id="CHEBI:456215"/>
        <dbReference type="EC" id="6.3.4.5"/>
    </reaction>
</comment>
<comment type="pathway">
    <text evidence="1">Amino-acid biosynthesis; L-arginine biosynthesis; L-arginine from L-ornithine and carbamoyl phosphate: step 2/3.</text>
</comment>
<comment type="subunit">
    <text evidence="1">Homotetramer.</text>
</comment>
<comment type="subcellular location">
    <subcellularLocation>
        <location evidence="1">Cytoplasm</location>
    </subcellularLocation>
</comment>
<comment type="similarity">
    <text evidence="1">Belongs to the argininosuccinate synthase family. Type 1 subfamily.</text>
</comment>
<organism>
    <name type="scientific">Clostridium acetobutylicum (strain ATCC 824 / DSM 792 / JCM 1419 / IAM 19013 / LMG 5710 / NBRC 13948 / NRRL B-527 / VKM B-1787 / 2291 / W)</name>
    <dbReference type="NCBI Taxonomy" id="272562"/>
    <lineage>
        <taxon>Bacteria</taxon>
        <taxon>Bacillati</taxon>
        <taxon>Bacillota</taxon>
        <taxon>Clostridia</taxon>
        <taxon>Eubacteriales</taxon>
        <taxon>Clostridiaceae</taxon>
        <taxon>Clostridium</taxon>
    </lineage>
</organism>
<dbReference type="EC" id="6.3.4.5" evidence="1"/>
<dbReference type="EMBL" id="AE001437">
    <property type="protein sequence ID" value="AAK78949.1"/>
    <property type="molecule type" value="Genomic_DNA"/>
</dbReference>
<dbReference type="PIR" id="B97020">
    <property type="entry name" value="B97020"/>
</dbReference>
<dbReference type="RefSeq" id="NP_347609.1">
    <property type="nucleotide sequence ID" value="NC_003030.1"/>
</dbReference>
<dbReference type="RefSeq" id="WP_010964291.1">
    <property type="nucleotide sequence ID" value="NC_003030.1"/>
</dbReference>
<dbReference type="SMR" id="Q97KE6"/>
<dbReference type="STRING" id="272562.CA_C0973"/>
<dbReference type="KEGG" id="cac:CA_C0973"/>
<dbReference type="PATRIC" id="fig|272562.8.peg.1182"/>
<dbReference type="eggNOG" id="COG0137">
    <property type="taxonomic scope" value="Bacteria"/>
</dbReference>
<dbReference type="HOGENOM" id="CLU_032784_4_2_9"/>
<dbReference type="OrthoDB" id="9801641at2"/>
<dbReference type="UniPathway" id="UPA00068">
    <property type="reaction ID" value="UER00113"/>
</dbReference>
<dbReference type="Proteomes" id="UP000000814">
    <property type="component" value="Chromosome"/>
</dbReference>
<dbReference type="GO" id="GO:0005737">
    <property type="term" value="C:cytoplasm"/>
    <property type="evidence" value="ECO:0007669"/>
    <property type="project" value="UniProtKB-SubCell"/>
</dbReference>
<dbReference type="GO" id="GO:0004055">
    <property type="term" value="F:argininosuccinate synthase activity"/>
    <property type="evidence" value="ECO:0007669"/>
    <property type="project" value="UniProtKB-UniRule"/>
</dbReference>
<dbReference type="GO" id="GO:0005524">
    <property type="term" value="F:ATP binding"/>
    <property type="evidence" value="ECO:0007669"/>
    <property type="project" value="UniProtKB-UniRule"/>
</dbReference>
<dbReference type="GO" id="GO:0000053">
    <property type="term" value="P:argininosuccinate metabolic process"/>
    <property type="evidence" value="ECO:0007669"/>
    <property type="project" value="TreeGrafter"/>
</dbReference>
<dbReference type="GO" id="GO:0006526">
    <property type="term" value="P:L-arginine biosynthetic process"/>
    <property type="evidence" value="ECO:0007669"/>
    <property type="project" value="UniProtKB-UniRule"/>
</dbReference>
<dbReference type="GO" id="GO:0000050">
    <property type="term" value="P:urea cycle"/>
    <property type="evidence" value="ECO:0007669"/>
    <property type="project" value="TreeGrafter"/>
</dbReference>
<dbReference type="CDD" id="cd01999">
    <property type="entry name" value="ASS"/>
    <property type="match status" value="1"/>
</dbReference>
<dbReference type="FunFam" id="3.40.50.620:FF:000019">
    <property type="entry name" value="Argininosuccinate synthase"/>
    <property type="match status" value="1"/>
</dbReference>
<dbReference type="FunFam" id="3.90.1260.10:FF:000007">
    <property type="entry name" value="Argininosuccinate synthase"/>
    <property type="match status" value="1"/>
</dbReference>
<dbReference type="Gene3D" id="3.90.1260.10">
    <property type="entry name" value="Argininosuccinate synthetase, chain A, domain 2"/>
    <property type="match status" value="1"/>
</dbReference>
<dbReference type="Gene3D" id="3.40.50.620">
    <property type="entry name" value="HUPs"/>
    <property type="match status" value="1"/>
</dbReference>
<dbReference type="Gene3D" id="1.20.5.470">
    <property type="entry name" value="Single helix bin"/>
    <property type="match status" value="1"/>
</dbReference>
<dbReference type="HAMAP" id="MF_00005">
    <property type="entry name" value="Arg_succ_synth_type1"/>
    <property type="match status" value="1"/>
</dbReference>
<dbReference type="InterPro" id="IPR048268">
    <property type="entry name" value="Arginosuc_syn_C"/>
</dbReference>
<dbReference type="InterPro" id="IPR048267">
    <property type="entry name" value="Arginosuc_syn_N"/>
</dbReference>
<dbReference type="InterPro" id="IPR001518">
    <property type="entry name" value="Arginosuc_synth"/>
</dbReference>
<dbReference type="InterPro" id="IPR018223">
    <property type="entry name" value="Arginosuc_synth_CS"/>
</dbReference>
<dbReference type="InterPro" id="IPR023434">
    <property type="entry name" value="Arginosuc_synth_type_1_subfam"/>
</dbReference>
<dbReference type="InterPro" id="IPR024074">
    <property type="entry name" value="AS_cat/multimer_dom_body"/>
</dbReference>
<dbReference type="InterPro" id="IPR014729">
    <property type="entry name" value="Rossmann-like_a/b/a_fold"/>
</dbReference>
<dbReference type="NCBIfam" id="TIGR00032">
    <property type="entry name" value="argG"/>
    <property type="match status" value="1"/>
</dbReference>
<dbReference type="NCBIfam" id="NF001770">
    <property type="entry name" value="PRK00509.1"/>
    <property type="match status" value="1"/>
</dbReference>
<dbReference type="PANTHER" id="PTHR11587">
    <property type="entry name" value="ARGININOSUCCINATE SYNTHASE"/>
    <property type="match status" value="1"/>
</dbReference>
<dbReference type="PANTHER" id="PTHR11587:SF2">
    <property type="entry name" value="ARGININOSUCCINATE SYNTHASE"/>
    <property type="match status" value="1"/>
</dbReference>
<dbReference type="Pfam" id="PF20979">
    <property type="entry name" value="Arginosuc_syn_C"/>
    <property type="match status" value="1"/>
</dbReference>
<dbReference type="Pfam" id="PF00764">
    <property type="entry name" value="Arginosuc_synth"/>
    <property type="match status" value="1"/>
</dbReference>
<dbReference type="SUPFAM" id="SSF52402">
    <property type="entry name" value="Adenine nucleotide alpha hydrolases-like"/>
    <property type="match status" value="1"/>
</dbReference>
<dbReference type="SUPFAM" id="SSF69864">
    <property type="entry name" value="Argininosuccinate synthetase, C-terminal domain"/>
    <property type="match status" value="1"/>
</dbReference>
<dbReference type="PROSITE" id="PS00564">
    <property type="entry name" value="ARGININOSUCCIN_SYN_1"/>
    <property type="match status" value="1"/>
</dbReference>
<dbReference type="PROSITE" id="PS00565">
    <property type="entry name" value="ARGININOSUCCIN_SYN_2"/>
    <property type="match status" value="1"/>
</dbReference>
<keyword id="KW-0028">Amino-acid biosynthesis</keyword>
<keyword id="KW-0055">Arginine biosynthesis</keyword>
<keyword id="KW-0067">ATP-binding</keyword>
<keyword id="KW-0963">Cytoplasm</keyword>
<keyword id="KW-0436">Ligase</keyword>
<keyword id="KW-0547">Nucleotide-binding</keyword>
<keyword id="KW-1185">Reference proteome</keyword>
<proteinExistence type="inferred from homology"/>
<gene>
    <name evidence="1" type="primary">argG</name>
    <name type="ordered locus">CA_C0973</name>
</gene>
<sequence>MKEKVVLAYSGGLDTSVTIPWLKDNYDVEVIAVCVNVGQEDDMDKVKEKAVNSGAAKIYVEDVKEEFVTEYLYNAIKWNATYEGKYLLGTSFARPLIAKKLVEVAHKEGAKYICHGCTGKGNDQVRFETAIAAMDPYIKIIAPWRLWNIDSREAEIDYALSKGVEVPVTKEKIYSEDWNLWHISHEGGDLEDPKNEHKEEMYKCVTPPEEAKDEPAYISIYFEKGVPCKINGEELEPVKLIEKVNKVAGENGIGVVDLVENRLVGMKSRGVYETPGGTLLYEAHAQLERLTVDKDAYHYKQVLALKYSELVYDGLWFTTTREALDAFVDTVEENVTGTVKLKLYKGNMKVSSVESENALYDEGISSFGASDLYDHKDAQGFINLFSLPSKIKAMKKLEKK</sequence>
<feature type="chain" id="PRO_0000148585" description="Argininosuccinate synthase">
    <location>
        <begin position="1"/>
        <end position="400"/>
    </location>
</feature>
<feature type="binding site" evidence="1">
    <location>
        <begin position="8"/>
        <end position="16"/>
    </location>
    <ligand>
        <name>ATP</name>
        <dbReference type="ChEBI" id="CHEBI:30616"/>
    </ligand>
</feature>
<feature type="binding site" evidence="1">
    <location>
        <position position="86"/>
    </location>
    <ligand>
        <name>L-citrulline</name>
        <dbReference type="ChEBI" id="CHEBI:57743"/>
    </ligand>
</feature>
<feature type="binding site" evidence="1">
    <location>
        <position position="91"/>
    </location>
    <ligand>
        <name>L-citrulline</name>
        <dbReference type="ChEBI" id="CHEBI:57743"/>
    </ligand>
</feature>
<feature type="binding site" evidence="1">
    <location>
        <position position="116"/>
    </location>
    <ligand>
        <name>ATP</name>
        <dbReference type="ChEBI" id="CHEBI:30616"/>
    </ligand>
</feature>
<feature type="binding site" evidence="1">
    <location>
        <position position="118"/>
    </location>
    <ligand>
        <name>L-aspartate</name>
        <dbReference type="ChEBI" id="CHEBI:29991"/>
    </ligand>
</feature>
<feature type="binding site" evidence="1">
    <location>
        <position position="122"/>
    </location>
    <ligand>
        <name>L-aspartate</name>
        <dbReference type="ChEBI" id="CHEBI:29991"/>
    </ligand>
</feature>
<feature type="binding site" evidence="1">
    <location>
        <position position="122"/>
    </location>
    <ligand>
        <name>L-citrulline</name>
        <dbReference type="ChEBI" id="CHEBI:57743"/>
    </ligand>
</feature>
<feature type="binding site" evidence="1">
    <location>
        <position position="123"/>
    </location>
    <ligand>
        <name>L-aspartate</name>
        <dbReference type="ChEBI" id="CHEBI:29991"/>
    </ligand>
</feature>
<feature type="binding site" evidence="1">
    <location>
        <position position="126"/>
    </location>
    <ligand>
        <name>L-citrulline</name>
        <dbReference type="ChEBI" id="CHEBI:57743"/>
    </ligand>
</feature>
<feature type="binding site" evidence="1">
    <location>
        <position position="175"/>
    </location>
    <ligand>
        <name>L-citrulline</name>
        <dbReference type="ChEBI" id="CHEBI:57743"/>
    </ligand>
</feature>
<feature type="binding site" evidence="1">
    <location>
        <position position="184"/>
    </location>
    <ligand>
        <name>L-citrulline</name>
        <dbReference type="ChEBI" id="CHEBI:57743"/>
    </ligand>
</feature>
<feature type="binding site" evidence="1">
    <location>
        <position position="260"/>
    </location>
    <ligand>
        <name>L-citrulline</name>
        <dbReference type="ChEBI" id="CHEBI:57743"/>
    </ligand>
</feature>
<feature type="binding site" evidence="1">
    <location>
        <position position="272"/>
    </location>
    <ligand>
        <name>L-citrulline</name>
        <dbReference type="ChEBI" id="CHEBI:57743"/>
    </ligand>
</feature>
<accession>Q97KE6</accession>